<gene>
    <name evidence="1" type="primary">uxaC</name>
    <name type="ordered locus">BCAN_B0827</name>
</gene>
<keyword id="KW-0413">Isomerase</keyword>
<keyword id="KW-1185">Reference proteome</keyword>
<organism>
    <name type="scientific">Brucella canis (strain ATCC 23365 / NCTC 10854 / RM-666)</name>
    <dbReference type="NCBI Taxonomy" id="483179"/>
    <lineage>
        <taxon>Bacteria</taxon>
        <taxon>Pseudomonadati</taxon>
        <taxon>Pseudomonadota</taxon>
        <taxon>Alphaproteobacteria</taxon>
        <taxon>Hyphomicrobiales</taxon>
        <taxon>Brucellaceae</taxon>
        <taxon>Brucella/Ochrobactrum group</taxon>
        <taxon>Brucella</taxon>
    </lineage>
</organism>
<protein>
    <recommendedName>
        <fullName evidence="1">Uronate isomerase</fullName>
        <ecNumber evidence="1">5.3.1.12</ecNumber>
    </recommendedName>
    <alternativeName>
        <fullName evidence="1">Glucuronate isomerase</fullName>
    </alternativeName>
    <alternativeName>
        <fullName evidence="1">Uronic isomerase</fullName>
    </alternativeName>
</protein>
<name>UXAC_BRUC2</name>
<comment type="catalytic activity">
    <reaction evidence="1">
        <text>D-glucuronate = D-fructuronate</text>
        <dbReference type="Rhea" id="RHEA:13049"/>
        <dbReference type="ChEBI" id="CHEBI:58720"/>
        <dbReference type="ChEBI" id="CHEBI:59863"/>
        <dbReference type="EC" id="5.3.1.12"/>
    </reaction>
</comment>
<comment type="catalytic activity">
    <reaction evidence="1">
        <text>aldehydo-D-galacturonate = keto-D-tagaturonate</text>
        <dbReference type="Rhea" id="RHEA:27702"/>
        <dbReference type="ChEBI" id="CHEBI:12952"/>
        <dbReference type="ChEBI" id="CHEBI:17886"/>
        <dbReference type="EC" id="5.3.1.12"/>
    </reaction>
</comment>
<comment type="pathway">
    <text evidence="1">Carbohydrate metabolism; pentose and glucuronate interconversion.</text>
</comment>
<comment type="similarity">
    <text evidence="1">Belongs to the metallo-dependent hydrolases superfamily. Uronate isomerase family.</text>
</comment>
<dbReference type="EC" id="5.3.1.12" evidence="1"/>
<dbReference type="EMBL" id="CP000873">
    <property type="protein sequence ID" value="ABX63986.1"/>
    <property type="molecule type" value="Genomic_DNA"/>
</dbReference>
<dbReference type="RefSeq" id="WP_004687147.1">
    <property type="nucleotide sequence ID" value="NC_010104.1"/>
</dbReference>
<dbReference type="SMR" id="A9MC99"/>
<dbReference type="GeneID" id="55592462"/>
<dbReference type="KEGG" id="bcs:BCAN_B0827"/>
<dbReference type="HOGENOM" id="CLU_044465_0_0_5"/>
<dbReference type="PhylomeDB" id="A9MC99"/>
<dbReference type="UniPathway" id="UPA00246"/>
<dbReference type="Proteomes" id="UP000001385">
    <property type="component" value="Chromosome II"/>
</dbReference>
<dbReference type="GO" id="GO:0008880">
    <property type="term" value="F:glucuronate isomerase activity"/>
    <property type="evidence" value="ECO:0007669"/>
    <property type="project" value="UniProtKB-UniRule"/>
</dbReference>
<dbReference type="GO" id="GO:0019698">
    <property type="term" value="P:D-galacturonate catabolic process"/>
    <property type="evidence" value="ECO:0007669"/>
    <property type="project" value="TreeGrafter"/>
</dbReference>
<dbReference type="GO" id="GO:0042840">
    <property type="term" value="P:D-glucuronate catabolic process"/>
    <property type="evidence" value="ECO:0007669"/>
    <property type="project" value="TreeGrafter"/>
</dbReference>
<dbReference type="Gene3D" id="3.20.20.140">
    <property type="entry name" value="Metal-dependent hydrolases"/>
    <property type="match status" value="1"/>
</dbReference>
<dbReference type="Gene3D" id="1.10.2020.10">
    <property type="entry name" value="uronate isomerase, domain 2, chain A"/>
    <property type="match status" value="1"/>
</dbReference>
<dbReference type="HAMAP" id="MF_00675">
    <property type="entry name" value="UxaC"/>
    <property type="match status" value="1"/>
</dbReference>
<dbReference type="InterPro" id="IPR032466">
    <property type="entry name" value="Metal_Hydrolase"/>
</dbReference>
<dbReference type="InterPro" id="IPR003766">
    <property type="entry name" value="Uronate_isomerase"/>
</dbReference>
<dbReference type="NCBIfam" id="NF002794">
    <property type="entry name" value="PRK02925.1"/>
    <property type="match status" value="1"/>
</dbReference>
<dbReference type="PANTHER" id="PTHR30068">
    <property type="entry name" value="URONATE ISOMERASE"/>
    <property type="match status" value="1"/>
</dbReference>
<dbReference type="PANTHER" id="PTHR30068:SF4">
    <property type="entry name" value="URONATE ISOMERASE"/>
    <property type="match status" value="1"/>
</dbReference>
<dbReference type="Pfam" id="PF02614">
    <property type="entry name" value="UxaC"/>
    <property type="match status" value="1"/>
</dbReference>
<dbReference type="SUPFAM" id="SSF51556">
    <property type="entry name" value="Metallo-dependent hydrolases"/>
    <property type="match status" value="1"/>
</dbReference>
<sequence length="466" mass="52750">MALNPDRLFSAEPGTREIARRLFASVEKLPIISPHGHTEPIWYARNEAFPDPASLFVKPDHYITRMLYSQGHSLESLGIASRDGRPSETDARKIWRLFATNWYLFRATPSRLWFEHAMETVFGITERLSQENADRIFDAIADQLTQPHMRPRALYDRFNIEAISTTDAATDPLIYHDEVIASGWHGRIIPAYRPDAAVDAGRPDFASEVEKLVGVAGTPLTWQGYLDAHRNRREYFKRRGATSSDHGHPTAQTADLSAGDASRLFDRVIKGNASTSDAEMFRAQMLTEMARMSIDDGLVMQIHPGSFRNHNPTVFERFGLDKGADIPRQTGFVDQLKPLLDAFGNDPRLTVILFTLDETAYSRELAPLAGHYPALKLGPAWWFFDSPEGILRYRKLTTETAGFYNTVGFNDDTRAYLSIPARHDMARRVDCAYLAGLVADHRLEEDEAYEVAHDLAYRLAKQTYKL</sequence>
<feature type="chain" id="PRO_1000082958" description="Uronate isomerase">
    <location>
        <begin position="1"/>
        <end position="466"/>
    </location>
</feature>
<reference key="1">
    <citation type="submission" date="2007-10" db="EMBL/GenBank/DDBJ databases">
        <title>Brucella canis ATCC 23365 whole genome shotgun sequencing project.</title>
        <authorList>
            <person name="Setubal J.C."/>
            <person name="Bowns C."/>
            <person name="Boyle S."/>
            <person name="Crasta O.R."/>
            <person name="Czar M.J."/>
            <person name="Dharmanolla C."/>
            <person name="Gillespie J.J."/>
            <person name="Kenyon R.W."/>
            <person name="Lu J."/>
            <person name="Mane S."/>
            <person name="Mohapatra S."/>
            <person name="Nagrani S."/>
            <person name="Purkayastha A."/>
            <person name="Rajasimha H.K."/>
            <person name="Shallom J.M."/>
            <person name="Shallom S."/>
            <person name="Shukla M."/>
            <person name="Snyder E.E."/>
            <person name="Sobral B.W."/>
            <person name="Wattam A.R."/>
            <person name="Will R."/>
            <person name="Williams K."/>
            <person name="Yoo H."/>
            <person name="Bruce D."/>
            <person name="Detter C."/>
            <person name="Munk C."/>
            <person name="Brettin T.S."/>
        </authorList>
    </citation>
    <scope>NUCLEOTIDE SEQUENCE [LARGE SCALE GENOMIC DNA]</scope>
    <source>
        <strain>ATCC 23365 / NCTC 10854 / RM-666</strain>
    </source>
</reference>
<accession>A9MC99</accession>
<evidence type="ECO:0000255" key="1">
    <source>
        <dbReference type="HAMAP-Rule" id="MF_00675"/>
    </source>
</evidence>
<proteinExistence type="inferred from homology"/>